<organism>
    <name type="scientific">Monkeypox virus</name>
    <dbReference type="NCBI Taxonomy" id="10244"/>
    <lineage>
        <taxon>Viruses</taxon>
        <taxon>Varidnaviria</taxon>
        <taxon>Bamfordvirae</taxon>
        <taxon>Nucleocytoviricota</taxon>
        <taxon>Pokkesviricetes</taxon>
        <taxon>Chitovirales</taxon>
        <taxon>Poxviridae</taxon>
        <taxon>Chordopoxvirinae</taxon>
        <taxon>Orthopoxvirus</taxon>
    </lineage>
</organism>
<keyword id="KW-0244">Early protein</keyword>
<keyword id="KW-1185">Reference proteome</keyword>
<organismHost>
    <name type="scientific">Cynomys gunnisoni</name>
    <name type="common">Gunnison's prairie dog</name>
    <name type="synonym">Spermophilus gunnisoni</name>
    <dbReference type="NCBI Taxonomy" id="45479"/>
</organismHost>
<organismHost>
    <name type="scientific">Cynomys leucurus</name>
    <name type="common">White-tailed prairie dog</name>
    <dbReference type="NCBI Taxonomy" id="99825"/>
</organismHost>
<organismHost>
    <name type="scientific">Cynomys ludovicianus</name>
    <name type="common">Black-tailed prairie dog</name>
    <dbReference type="NCBI Taxonomy" id="45480"/>
</organismHost>
<organismHost>
    <name type="scientific">Cynomys mexicanus</name>
    <name type="common">Mexican prairie dog</name>
    <dbReference type="NCBI Taxonomy" id="99826"/>
</organismHost>
<organismHost>
    <name type="scientific">Cynomys parvidens</name>
    <name type="common">Utah prairie dog</name>
    <dbReference type="NCBI Taxonomy" id="99827"/>
</organismHost>
<organismHost>
    <name type="scientific">Gliridae</name>
    <name type="common">dormice</name>
    <dbReference type="NCBI Taxonomy" id="30650"/>
</organismHost>
<organismHost>
    <name type="scientific">Heliosciurus ruwenzorii</name>
    <name type="common">Ruwenzori sun squirrel</name>
    <dbReference type="NCBI Taxonomy" id="226685"/>
</organismHost>
<organismHost>
    <name type="scientific">Homo sapiens</name>
    <name type="common">Human</name>
    <dbReference type="NCBI Taxonomy" id="9606"/>
</organismHost>
<organismHost>
    <name type="scientific">Mus musculus</name>
    <name type="common">Mouse</name>
    <dbReference type="NCBI Taxonomy" id="10090"/>
</organismHost>
<name>PG051_MONPV</name>
<comment type="induction">
    <text evidence="1">Expressed in the early phase of the viral replicative cycle.</text>
</comment>
<comment type="similarity">
    <text evidence="2">Belongs to the orthopoxvirus OPG051 family.</text>
</comment>
<reference key="1">
    <citation type="journal article" date="2022" name="J. Infect. Dis.">
        <title>Exportation of Monkeypox virus from the African continent.</title>
        <authorList>
            <person name="Mauldin M.R."/>
            <person name="McCollum A.M."/>
            <person name="Nakazawa Y.J."/>
            <person name="Mandra A."/>
            <person name="Whitehouse E.R."/>
            <person name="Davidson W."/>
            <person name="Zhao H."/>
            <person name="Gao J."/>
            <person name="Li Y."/>
            <person name="Doty J."/>
            <person name="Yinka-Ogunleye A."/>
            <person name="Akinpelu A."/>
            <person name="Aruna O."/>
            <person name="Naidoo D."/>
            <person name="Lewandowski K."/>
            <person name="Afrough B."/>
            <person name="Graham V."/>
            <person name="Aarons E."/>
            <person name="Hewson R."/>
            <person name="Vipond R."/>
            <person name="Dunning J."/>
            <person name="Chand M."/>
            <person name="Brown C."/>
            <person name="Cohen-Gihon I."/>
            <person name="Erez N."/>
            <person name="Shifman O."/>
            <person name="Israeli O."/>
            <person name="Sharon M."/>
            <person name="Schwartz E."/>
            <person name="Beth-Din A."/>
            <person name="Zvi A."/>
            <person name="Mak T.M."/>
            <person name="Ng Y.K."/>
            <person name="Cui L."/>
            <person name="Lin R.T.P."/>
            <person name="Olson V.A."/>
            <person name="Brooks T."/>
            <person name="Paran N."/>
            <person name="Ihekweazu C."/>
            <person name="Reynolds M.G."/>
        </authorList>
    </citation>
    <scope>NUCLEOTIDE SEQUENCE [LARGE SCALE GENOMIC DNA]</scope>
    <source>
        <strain>MPXV-M5312_HM12_Rivers</strain>
    </source>
</reference>
<gene>
    <name type="primary">OPG051</name>
    <name type="ORF">MPXVgp039</name>
</gene>
<protein>
    <recommendedName>
        <fullName>Protein OPG051</fullName>
    </recommendedName>
    <alternativeName>
        <fullName>Protein F7</fullName>
    </alternativeName>
</protein>
<evidence type="ECO:0000250" key="1">
    <source>
        <dbReference type="UniProtKB" id="P24359"/>
    </source>
</evidence>
<evidence type="ECO:0000305" key="2"/>
<accession>A0A7H0DN24</accession>
<sequence>MGSCCGRFCDAKNKKEDVEDGREGCCDYKNLNDLDESEARVEFGPLYMINEEKSDINTLDIKRRYRHTIESVYF</sequence>
<proteinExistence type="inferred from homology"/>
<dbReference type="EMBL" id="MT903340">
    <property type="protein sequence ID" value="QNP12907.1"/>
    <property type="molecule type" value="Genomic_DNA"/>
</dbReference>
<dbReference type="RefSeq" id="NP_536466.1">
    <property type="nucleotide sequence ID" value="NC_003310.1"/>
</dbReference>
<dbReference type="RefSeq" id="YP_010377034.1">
    <property type="nucleotide sequence ID" value="NC_063383.1"/>
</dbReference>
<dbReference type="GeneID" id="72551447"/>
<dbReference type="GeneID" id="928940"/>
<dbReference type="KEGG" id="vg:928940"/>
<dbReference type="Proteomes" id="UP000516359">
    <property type="component" value="Genome"/>
</dbReference>
<dbReference type="InterPro" id="IPR008725">
    <property type="entry name" value="Orthopox_F7"/>
</dbReference>
<dbReference type="Pfam" id="PF05813">
    <property type="entry name" value="Orthopox_F7"/>
    <property type="match status" value="1"/>
</dbReference>
<feature type="chain" id="PRO_0000457633" description="Protein OPG051">
    <location>
        <begin position="1"/>
        <end position="74"/>
    </location>
</feature>